<geneLocation type="mitochondrion"/>
<gene>
    <name type="primary">MT-CYB</name>
    <name type="synonym">COB</name>
    <name type="synonym">CYTB</name>
    <name type="synonym">MTCYB</name>
</gene>
<reference key="1">
    <citation type="journal article" date="1996" name="Biochem. Genet.">
        <title>Phylogenetic relationship among all living species of the genus Bubalus based on DNA sequences of the cytochrome b gene.</title>
        <authorList>
            <person name="Tanaka K."/>
            <person name="Solis C.D."/>
            <person name="Masangkay J.S."/>
            <person name="Maeda K."/>
            <person name="Kawamoto Y."/>
            <person name="Namikawa T."/>
        </authorList>
    </citation>
    <scope>NUCLEOTIDE SEQUENCE [GENOMIC DNA]</scope>
    <source>
        <strain>Isolate Mindoro island</strain>
        <tissue>Blood</tissue>
    </source>
</reference>
<feature type="chain" id="PRO_0000060696" description="Cytochrome b">
    <location>
        <begin position="1"/>
        <end position="379"/>
    </location>
</feature>
<feature type="transmembrane region" description="Helical" evidence="2">
    <location>
        <begin position="33"/>
        <end position="53"/>
    </location>
</feature>
<feature type="transmembrane region" description="Helical" evidence="2">
    <location>
        <begin position="77"/>
        <end position="98"/>
    </location>
</feature>
<feature type="transmembrane region" description="Helical" evidence="2">
    <location>
        <begin position="113"/>
        <end position="133"/>
    </location>
</feature>
<feature type="transmembrane region" description="Helical" evidence="2">
    <location>
        <begin position="178"/>
        <end position="198"/>
    </location>
</feature>
<feature type="transmembrane region" description="Helical" evidence="2">
    <location>
        <begin position="226"/>
        <end position="246"/>
    </location>
</feature>
<feature type="transmembrane region" description="Helical" evidence="2">
    <location>
        <begin position="288"/>
        <end position="308"/>
    </location>
</feature>
<feature type="transmembrane region" description="Helical" evidence="2">
    <location>
        <begin position="320"/>
        <end position="340"/>
    </location>
</feature>
<feature type="transmembrane region" description="Helical" evidence="2">
    <location>
        <begin position="347"/>
        <end position="367"/>
    </location>
</feature>
<feature type="binding site" description="axial binding residue" evidence="2">
    <location>
        <position position="83"/>
    </location>
    <ligand>
        <name>heme b</name>
        <dbReference type="ChEBI" id="CHEBI:60344"/>
        <label>b562</label>
    </ligand>
    <ligandPart>
        <name>Fe</name>
        <dbReference type="ChEBI" id="CHEBI:18248"/>
    </ligandPart>
</feature>
<feature type="binding site" description="axial binding residue" evidence="2">
    <location>
        <position position="97"/>
    </location>
    <ligand>
        <name>heme b</name>
        <dbReference type="ChEBI" id="CHEBI:60344"/>
        <label>b566</label>
    </ligand>
    <ligandPart>
        <name>Fe</name>
        <dbReference type="ChEBI" id="CHEBI:18248"/>
    </ligandPart>
</feature>
<feature type="binding site" description="axial binding residue" evidence="2">
    <location>
        <position position="182"/>
    </location>
    <ligand>
        <name>heme b</name>
        <dbReference type="ChEBI" id="CHEBI:60344"/>
        <label>b562</label>
    </ligand>
    <ligandPart>
        <name>Fe</name>
        <dbReference type="ChEBI" id="CHEBI:18248"/>
    </ligandPart>
</feature>
<feature type="binding site" description="axial binding residue" evidence="2">
    <location>
        <position position="196"/>
    </location>
    <ligand>
        <name>heme b</name>
        <dbReference type="ChEBI" id="CHEBI:60344"/>
        <label>b566</label>
    </ligand>
    <ligandPart>
        <name>Fe</name>
        <dbReference type="ChEBI" id="CHEBI:18248"/>
    </ligandPart>
</feature>
<feature type="binding site" evidence="2">
    <location>
        <position position="201"/>
    </location>
    <ligand>
        <name>a ubiquinone</name>
        <dbReference type="ChEBI" id="CHEBI:16389"/>
    </ligand>
</feature>
<comment type="function">
    <text evidence="2">Component of the ubiquinol-cytochrome c reductase complex (complex III or cytochrome b-c1 complex) that is part of the mitochondrial respiratory chain. The b-c1 complex mediates electron transfer from ubiquinol to cytochrome c. Contributes to the generation of a proton gradient across the mitochondrial membrane that is then used for ATP synthesis.</text>
</comment>
<comment type="cofactor">
    <cofactor evidence="2">
        <name>heme b</name>
        <dbReference type="ChEBI" id="CHEBI:60344"/>
    </cofactor>
    <text evidence="2">Binds 2 heme b groups non-covalently.</text>
</comment>
<comment type="subunit">
    <text evidence="2">The cytochrome bc1 complex contains 11 subunits: 3 respiratory subunits (MT-CYB, CYC1 and UQCRFS1), 2 core proteins (UQCRC1 and UQCRC2) and 6 low-molecular weight proteins (UQCRH/QCR6, UQCRB/QCR7, UQCRQ/QCR8, UQCR10/QCR9, UQCR11/QCR10 and a cleavage product of UQCRFS1). This cytochrome bc1 complex then forms a dimer.</text>
</comment>
<comment type="subcellular location">
    <subcellularLocation>
        <location evidence="2">Mitochondrion inner membrane</location>
        <topology evidence="2">Multi-pass membrane protein</topology>
    </subcellularLocation>
</comment>
<comment type="miscellaneous">
    <text evidence="1">Heme 1 (or BL or b562) is low-potential and absorbs at about 562 nm, and heme 2 (or BH or b566) is high-potential and absorbs at about 566 nm.</text>
</comment>
<comment type="similarity">
    <text evidence="3 4">Belongs to the cytochrome b family.</text>
</comment>
<comment type="caution">
    <text evidence="2">The full-length protein contains only eight transmembrane helices, not nine as predicted by bioinformatics tools.</text>
</comment>
<evidence type="ECO:0000250" key="1"/>
<evidence type="ECO:0000250" key="2">
    <source>
        <dbReference type="UniProtKB" id="P00157"/>
    </source>
</evidence>
<evidence type="ECO:0000255" key="3">
    <source>
        <dbReference type="PROSITE-ProRule" id="PRU00967"/>
    </source>
</evidence>
<evidence type="ECO:0000255" key="4">
    <source>
        <dbReference type="PROSITE-ProRule" id="PRU00968"/>
    </source>
</evidence>
<protein>
    <recommendedName>
        <fullName>Cytochrome b</fullName>
    </recommendedName>
    <alternativeName>
        <fullName>Complex III subunit 3</fullName>
    </alternativeName>
    <alternativeName>
        <fullName>Complex III subunit III</fullName>
    </alternativeName>
    <alternativeName>
        <fullName>Cytochrome b-c1 complex subunit 3</fullName>
    </alternativeName>
    <alternativeName>
        <fullName>Ubiquinol-cytochrome-c reductase complex cytochrome b subunit</fullName>
    </alternativeName>
</protein>
<organism>
    <name type="scientific">Bubalus mindorensis</name>
    <name type="common">Tamaraw</name>
    <name type="synonym">Anoa midorensis</name>
    <dbReference type="NCBI Taxonomy" id="56639"/>
    <lineage>
        <taxon>Eukaryota</taxon>
        <taxon>Metazoa</taxon>
        <taxon>Chordata</taxon>
        <taxon>Craniata</taxon>
        <taxon>Vertebrata</taxon>
        <taxon>Euteleostomi</taxon>
        <taxon>Mammalia</taxon>
        <taxon>Eutheria</taxon>
        <taxon>Laurasiatheria</taxon>
        <taxon>Artiodactyla</taxon>
        <taxon>Ruminantia</taxon>
        <taxon>Pecora</taxon>
        <taxon>Bovidae</taxon>
        <taxon>Bovinae</taxon>
        <taxon>Bubalus</taxon>
    </lineage>
</organism>
<keyword id="KW-0249">Electron transport</keyword>
<keyword id="KW-0349">Heme</keyword>
<keyword id="KW-0408">Iron</keyword>
<keyword id="KW-0472">Membrane</keyword>
<keyword id="KW-0479">Metal-binding</keyword>
<keyword id="KW-0496">Mitochondrion</keyword>
<keyword id="KW-0999">Mitochondrion inner membrane</keyword>
<keyword id="KW-0679">Respiratory chain</keyword>
<keyword id="KW-0812">Transmembrane</keyword>
<keyword id="KW-1133">Transmembrane helix</keyword>
<keyword id="KW-0813">Transport</keyword>
<keyword id="KW-0830">Ubiquinone</keyword>
<proteinExistence type="inferred from homology"/>
<accession>P92584</accession>
<dbReference type="EMBL" id="D82895">
    <property type="protein sequence ID" value="BAA11631.1"/>
    <property type="molecule type" value="Genomic_DNA"/>
</dbReference>
<dbReference type="SMR" id="P92584"/>
<dbReference type="GO" id="GO:0005743">
    <property type="term" value="C:mitochondrial inner membrane"/>
    <property type="evidence" value="ECO:0007669"/>
    <property type="project" value="UniProtKB-SubCell"/>
</dbReference>
<dbReference type="GO" id="GO:0045275">
    <property type="term" value="C:respiratory chain complex III"/>
    <property type="evidence" value="ECO:0007669"/>
    <property type="project" value="InterPro"/>
</dbReference>
<dbReference type="GO" id="GO:0046872">
    <property type="term" value="F:metal ion binding"/>
    <property type="evidence" value="ECO:0007669"/>
    <property type="project" value="UniProtKB-KW"/>
</dbReference>
<dbReference type="GO" id="GO:0008121">
    <property type="term" value="F:ubiquinol-cytochrome-c reductase activity"/>
    <property type="evidence" value="ECO:0007669"/>
    <property type="project" value="InterPro"/>
</dbReference>
<dbReference type="GO" id="GO:0006122">
    <property type="term" value="P:mitochondrial electron transport, ubiquinol to cytochrome c"/>
    <property type="evidence" value="ECO:0007669"/>
    <property type="project" value="TreeGrafter"/>
</dbReference>
<dbReference type="CDD" id="cd00290">
    <property type="entry name" value="cytochrome_b_C"/>
    <property type="match status" value="1"/>
</dbReference>
<dbReference type="CDD" id="cd00284">
    <property type="entry name" value="Cytochrome_b_N"/>
    <property type="match status" value="1"/>
</dbReference>
<dbReference type="FunFam" id="1.20.810.10:FF:000002">
    <property type="entry name" value="Cytochrome b"/>
    <property type="match status" value="1"/>
</dbReference>
<dbReference type="Gene3D" id="1.20.810.10">
    <property type="entry name" value="Cytochrome Bc1 Complex, Chain C"/>
    <property type="match status" value="1"/>
</dbReference>
<dbReference type="InterPro" id="IPR005798">
    <property type="entry name" value="Cyt_b/b6_C"/>
</dbReference>
<dbReference type="InterPro" id="IPR036150">
    <property type="entry name" value="Cyt_b/b6_C_sf"/>
</dbReference>
<dbReference type="InterPro" id="IPR005797">
    <property type="entry name" value="Cyt_b/b6_N"/>
</dbReference>
<dbReference type="InterPro" id="IPR027387">
    <property type="entry name" value="Cytb/b6-like_sf"/>
</dbReference>
<dbReference type="InterPro" id="IPR030689">
    <property type="entry name" value="Cytochrome_b"/>
</dbReference>
<dbReference type="InterPro" id="IPR048260">
    <property type="entry name" value="Cytochrome_b_C_euk/bac"/>
</dbReference>
<dbReference type="InterPro" id="IPR048259">
    <property type="entry name" value="Cytochrome_b_N_euk/bac"/>
</dbReference>
<dbReference type="InterPro" id="IPR016174">
    <property type="entry name" value="Di-haem_cyt_TM"/>
</dbReference>
<dbReference type="PANTHER" id="PTHR19271">
    <property type="entry name" value="CYTOCHROME B"/>
    <property type="match status" value="1"/>
</dbReference>
<dbReference type="PANTHER" id="PTHR19271:SF16">
    <property type="entry name" value="CYTOCHROME B"/>
    <property type="match status" value="1"/>
</dbReference>
<dbReference type="Pfam" id="PF00032">
    <property type="entry name" value="Cytochrom_B_C"/>
    <property type="match status" value="1"/>
</dbReference>
<dbReference type="Pfam" id="PF00033">
    <property type="entry name" value="Cytochrome_B"/>
    <property type="match status" value="1"/>
</dbReference>
<dbReference type="PIRSF" id="PIRSF038885">
    <property type="entry name" value="COB"/>
    <property type="match status" value="1"/>
</dbReference>
<dbReference type="SUPFAM" id="SSF81648">
    <property type="entry name" value="a domain/subunit of cytochrome bc1 complex (Ubiquinol-cytochrome c reductase)"/>
    <property type="match status" value="1"/>
</dbReference>
<dbReference type="SUPFAM" id="SSF81342">
    <property type="entry name" value="Transmembrane di-heme cytochromes"/>
    <property type="match status" value="1"/>
</dbReference>
<dbReference type="PROSITE" id="PS51003">
    <property type="entry name" value="CYTB_CTER"/>
    <property type="match status" value="1"/>
</dbReference>
<dbReference type="PROSITE" id="PS51002">
    <property type="entry name" value="CYTB_NTER"/>
    <property type="match status" value="1"/>
</dbReference>
<sequence length="379" mass="42748">MTNIRKSHPLMKILNNAFIDLPAPSNISSWWNFGSLLGICLILQILTGLFLAMHYSSDTTTAFSSVAHICRDVNYGWIIRYMHANGASMFFICLYMHVGRGMYYGSYTFLETWNIGVILLFTVMATAFMGYVLPWGQMSFWGATVITNLLSAIPYIGTNLVEWIWGGFSVDKATLTRFFAFHFILPFIIAALAMVHLLFLHETGSNNPTGISSDTDKIPFHPYYTIKDILGALLLILALMLLVLFTPDLLGDPDNYTPANPLNTPPHIKPEWYFLFAYAILRSVPNKLGGVLALVLSILILILMPLLHTSKQRSMMFRPFSQCLFWILVANLLTLTWIGGQPVEHPYITIGQLASITYFLLILVLMPTASMIENNLLKW</sequence>
<name>CYB_BUBMI</name>